<comment type="function">
    <text evidence="1">Catalyzes the phosphorylation of the hydroxyl group of 4-methyl-5-beta-hydroxyethylthiazole (THZ).</text>
</comment>
<comment type="catalytic activity">
    <reaction evidence="1">
        <text>5-(2-hydroxyethyl)-4-methylthiazole + ATP = 4-methyl-5-(2-phosphooxyethyl)-thiazole + ADP + H(+)</text>
        <dbReference type="Rhea" id="RHEA:24212"/>
        <dbReference type="ChEBI" id="CHEBI:15378"/>
        <dbReference type="ChEBI" id="CHEBI:17957"/>
        <dbReference type="ChEBI" id="CHEBI:30616"/>
        <dbReference type="ChEBI" id="CHEBI:58296"/>
        <dbReference type="ChEBI" id="CHEBI:456216"/>
        <dbReference type="EC" id="2.7.1.50"/>
    </reaction>
</comment>
<comment type="cofactor">
    <cofactor evidence="1">
        <name>Mg(2+)</name>
        <dbReference type="ChEBI" id="CHEBI:18420"/>
    </cofactor>
</comment>
<comment type="pathway">
    <text evidence="1">Cofactor biosynthesis; thiamine diphosphate biosynthesis; 4-methyl-5-(2-phosphoethyl)-thiazole from 5-(2-hydroxyethyl)-4-methylthiazole: step 1/1.</text>
</comment>
<comment type="similarity">
    <text evidence="1">Belongs to the Thz kinase family.</text>
</comment>
<gene>
    <name evidence="1" type="primary">thiM</name>
    <name type="ordered locus">LAF_0803</name>
</gene>
<accession>B2GBV7</accession>
<sequence>MQNAIATIKETNPIVLTVANNVTPADVANGLNALGASPMMSQTPEEADDMVNIAQAAAINLGTLNPHQRGEMEAVMEAAKKYHKPTVLDPVACGATMYRLRVVTELLHQYHFTVIRGNAGEIATLAGVEWQSHGIDAGEGNADLEKVARLAAEKLGSVIVLSGEVDIVTDSTRLARLPYGSPAFKTHVGTGDMLSSLIGAFLATNDDAFDAAVDAVTTFTLCGQAVEDQRPGNWYPGLLNNLDAVTDQQLAAWQ</sequence>
<keyword id="KW-0067">ATP-binding</keyword>
<keyword id="KW-0418">Kinase</keyword>
<keyword id="KW-0460">Magnesium</keyword>
<keyword id="KW-0479">Metal-binding</keyword>
<keyword id="KW-0547">Nucleotide-binding</keyword>
<keyword id="KW-1185">Reference proteome</keyword>
<keyword id="KW-0784">Thiamine biosynthesis</keyword>
<keyword id="KW-0808">Transferase</keyword>
<name>THIM_LIMF3</name>
<dbReference type="EC" id="2.7.1.50" evidence="1"/>
<dbReference type="EMBL" id="AP008937">
    <property type="protein sequence ID" value="BAG27139.1"/>
    <property type="molecule type" value="Genomic_DNA"/>
</dbReference>
<dbReference type="RefSeq" id="WP_012391151.1">
    <property type="nucleotide sequence ID" value="NC_010610.1"/>
</dbReference>
<dbReference type="SMR" id="B2GBV7"/>
<dbReference type="KEGG" id="lfe:LAF_0803"/>
<dbReference type="PATRIC" id="fig|334390.5.peg.885"/>
<dbReference type="eggNOG" id="COG2145">
    <property type="taxonomic scope" value="Bacteria"/>
</dbReference>
<dbReference type="HOGENOM" id="CLU_019943_0_0_9"/>
<dbReference type="UniPathway" id="UPA00060">
    <property type="reaction ID" value="UER00139"/>
</dbReference>
<dbReference type="Proteomes" id="UP000001697">
    <property type="component" value="Chromosome"/>
</dbReference>
<dbReference type="GO" id="GO:0005524">
    <property type="term" value="F:ATP binding"/>
    <property type="evidence" value="ECO:0007669"/>
    <property type="project" value="UniProtKB-UniRule"/>
</dbReference>
<dbReference type="GO" id="GO:0004417">
    <property type="term" value="F:hydroxyethylthiazole kinase activity"/>
    <property type="evidence" value="ECO:0007669"/>
    <property type="project" value="UniProtKB-UniRule"/>
</dbReference>
<dbReference type="GO" id="GO:0000287">
    <property type="term" value="F:magnesium ion binding"/>
    <property type="evidence" value="ECO:0007669"/>
    <property type="project" value="UniProtKB-UniRule"/>
</dbReference>
<dbReference type="GO" id="GO:0009228">
    <property type="term" value="P:thiamine biosynthetic process"/>
    <property type="evidence" value="ECO:0007669"/>
    <property type="project" value="UniProtKB-KW"/>
</dbReference>
<dbReference type="GO" id="GO:0009229">
    <property type="term" value="P:thiamine diphosphate biosynthetic process"/>
    <property type="evidence" value="ECO:0007669"/>
    <property type="project" value="UniProtKB-UniRule"/>
</dbReference>
<dbReference type="CDD" id="cd01170">
    <property type="entry name" value="THZ_kinase"/>
    <property type="match status" value="1"/>
</dbReference>
<dbReference type="Gene3D" id="3.40.1190.20">
    <property type="match status" value="1"/>
</dbReference>
<dbReference type="HAMAP" id="MF_00228">
    <property type="entry name" value="Thz_kinase"/>
    <property type="match status" value="1"/>
</dbReference>
<dbReference type="InterPro" id="IPR000417">
    <property type="entry name" value="Hyethyz_kinase"/>
</dbReference>
<dbReference type="InterPro" id="IPR029056">
    <property type="entry name" value="Ribokinase-like"/>
</dbReference>
<dbReference type="NCBIfam" id="NF006830">
    <property type="entry name" value="PRK09355.1"/>
    <property type="match status" value="1"/>
</dbReference>
<dbReference type="Pfam" id="PF02110">
    <property type="entry name" value="HK"/>
    <property type="match status" value="1"/>
</dbReference>
<dbReference type="PIRSF" id="PIRSF000513">
    <property type="entry name" value="Thz_kinase"/>
    <property type="match status" value="1"/>
</dbReference>
<dbReference type="PRINTS" id="PR01099">
    <property type="entry name" value="HYETHTZKNASE"/>
</dbReference>
<dbReference type="SUPFAM" id="SSF53613">
    <property type="entry name" value="Ribokinase-like"/>
    <property type="match status" value="1"/>
</dbReference>
<reference key="1">
    <citation type="journal article" date="2008" name="DNA Res.">
        <title>Comparative genome analysis of Lactobacillus reuteri and Lactobacillus fermentum reveal a genomic island for reuterin and cobalamin production.</title>
        <authorList>
            <person name="Morita H."/>
            <person name="Toh H."/>
            <person name="Fukuda S."/>
            <person name="Horikawa H."/>
            <person name="Oshima K."/>
            <person name="Suzuki T."/>
            <person name="Murakami M."/>
            <person name="Hisamatsu S."/>
            <person name="Kato Y."/>
            <person name="Takizawa T."/>
            <person name="Fukuoka H."/>
            <person name="Yoshimura T."/>
            <person name="Itoh K."/>
            <person name="O'Sullivan D.J."/>
            <person name="McKay L.L."/>
            <person name="Ohno H."/>
            <person name="Kikuchi J."/>
            <person name="Masaoka T."/>
            <person name="Hattori M."/>
        </authorList>
    </citation>
    <scope>NUCLEOTIDE SEQUENCE [LARGE SCALE GENOMIC DNA]</scope>
    <source>
        <strain>NBRC 3956 / LMG 18251</strain>
    </source>
</reference>
<proteinExistence type="inferred from homology"/>
<evidence type="ECO:0000255" key="1">
    <source>
        <dbReference type="HAMAP-Rule" id="MF_00228"/>
    </source>
</evidence>
<protein>
    <recommendedName>
        <fullName evidence="1">Hydroxyethylthiazole kinase</fullName>
        <ecNumber evidence="1">2.7.1.50</ecNumber>
    </recommendedName>
    <alternativeName>
        <fullName evidence="1">4-methyl-5-beta-hydroxyethylthiazole kinase</fullName>
        <shortName evidence="1">TH kinase</shortName>
        <shortName evidence="1">Thz kinase</shortName>
    </alternativeName>
</protein>
<organism>
    <name type="scientific">Limosilactobacillus fermentum (strain NBRC 3956 / LMG 18251)</name>
    <name type="common">Lactobacillus fermentum</name>
    <dbReference type="NCBI Taxonomy" id="334390"/>
    <lineage>
        <taxon>Bacteria</taxon>
        <taxon>Bacillati</taxon>
        <taxon>Bacillota</taxon>
        <taxon>Bacilli</taxon>
        <taxon>Lactobacillales</taxon>
        <taxon>Lactobacillaceae</taxon>
        <taxon>Limosilactobacillus</taxon>
    </lineage>
</organism>
<feature type="chain" id="PRO_0000383871" description="Hydroxyethylthiazole kinase">
    <location>
        <begin position="1"/>
        <end position="254"/>
    </location>
</feature>
<feature type="binding site" evidence="1">
    <location>
        <position position="40"/>
    </location>
    <ligand>
        <name>substrate</name>
    </ligand>
</feature>
<feature type="binding site" evidence="1">
    <location>
        <position position="116"/>
    </location>
    <ligand>
        <name>ATP</name>
        <dbReference type="ChEBI" id="CHEBI:30616"/>
    </ligand>
</feature>
<feature type="binding site" evidence="1">
    <location>
        <position position="162"/>
    </location>
    <ligand>
        <name>ATP</name>
        <dbReference type="ChEBI" id="CHEBI:30616"/>
    </ligand>
</feature>
<feature type="binding site" evidence="1">
    <location>
        <position position="189"/>
    </location>
    <ligand>
        <name>substrate</name>
    </ligand>
</feature>